<keyword id="KW-0276">Fatty acid metabolism</keyword>
<keyword id="KW-0443">Lipid metabolism</keyword>
<keyword id="KW-0596">Phosphopantetheine</keyword>
<keyword id="KW-0597">Phosphoprotein</keyword>
<comment type="function">
    <text evidence="2 3">Acyl-carrier protein (ACP) involved in the biosynthesis of a unique class of isonitrile lipopeptides (INLPs). Is the dedicated ACP for the loading of activated acyl groups catalyzed by ScoC.</text>
</comment>
<comment type="cofactor">
    <cofactor evidence="1">
        <name>pantetheine 4'-phosphate</name>
        <dbReference type="ChEBI" id="CHEBI:47942"/>
    </cofactor>
</comment>
<comment type="pathway">
    <text evidence="5">Lipid metabolism; fatty acid metabolism.</text>
</comment>
<comment type="similarity">
    <text evidence="5">Belongs to the acyl carrier protein (ACP) family.</text>
</comment>
<reference key="1">
    <citation type="journal article" date="2017" name="Proc. Natl. Acad. Sci. U.S.A.">
        <title>Biosynthesis of isonitrile lipopeptides by conserved nonribosomal peptide synthetase gene clusters in Actinobacteria.</title>
        <authorList>
            <person name="Harris N.C."/>
            <person name="Sato M."/>
            <person name="Herman N.A."/>
            <person name="Twigg F."/>
            <person name="Cai W."/>
            <person name="Liu J."/>
            <person name="Zhu X."/>
            <person name="Downey J."/>
            <person name="Khalaf R."/>
            <person name="Martin J."/>
            <person name="Koshino H."/>
            <person name="Zhang W."/>
        </authorList>
    </citation>
    <scope>NUCLEOTIDE SEQUENCE [GENOMIC DNA]</scope>
    <scope>FUNCTION</scope>
    <source>
        <strain>NRRL 18370</strain>
    </source>
</reference>
<reference key="2">
    <citation type="journal article" date="2018" name="Angew. Chem. Int. Ed. Engl.">
        <title>Isonitrile Formation by a Non-Heme Iron(II)-Dependent Oxidase/Decarboxylase.</title>
        <authorList>
            <person name="Harris N.C."/>
            <person name="Born D.A."/>
            <person name="Cai W."/>
            <person name="Huang Y."/>
            <person name="Martin J."/>
            <person name="Khalaf R."/>
            <person name="Drennan C.L."/>
            <person name="Zhang W."/>
        </authorList>
    </citation>
    <scope>FUNCTION</scope>
    <source>
        <strain>NRRL 18370</strain>
    </source>
</reference>
<name>INLPB_STRC4</name>
<accession>P0DX15</accession>
<protein>
    <recommendedName>
        <fullName evidence="6 7">Acyl carrier protein ScoB</fullName>
    </recommendedName>
</protein>
<dbReference type="EMBL" id="OL448872">
    <property type="protein sequence ID" value="UYZ56981.1"/>
    <property type="molecule type" value="Genomic_DNA"/>
</dbReference>
<dbReference type="SMR" id="P0DX15"/>
<dbReference type="UniPathway" id="UPA00199"/>
<dbReference type="GO" id="GO:0006631">
    <property type="term" value="P:fatty acid metabolic process"/>
    <property type="evidence" value="ECO:0007669"/>
    <property type="project" value="UniProtKB-UniPathway"/>
</dbReference>
<dbReference type="Gene3D" id="1.10.1200.10">
    <property type="entry name" value="ACP-like"/>
    <property type="match status" value="1"/>
</dbReference>
<dbReference type="InterPro" id="IPR036736">
    <property type="entry name" value="ACP-like_sf"/>
</dbReference>
<dbReference type="InterPro" id="IPR009081">
    <property type="entry name" value="PP-bd_ACP"/>
</dbReference>
<dbReference type="Pfam" id="PF00550">
    <property type="entry name" value="PP-binding"/>
    <property type="match status" value="1"/>
</dbReference>
<dbReference type="SUPFAM" id="SSF47336">
    <property type="entry name" value="ACP-like"/>
    <property type="match status" value="1"/>
</dbReference>
<sequence>MPAPLTLDGFRADLAEFLYQQPDEVDLEENPLYAGLDSLRIVTLIERWRETGADVSFIELAECTSFDQWWQLLSARQGGAGHVTA</sequence>
<feature type="chain" id="PRO_0000458125" description="Acyl carrier protein ScoB">
    <location>
        <begin position="1"/>
        <end position="85"/>
    </location>
</feature>
<feature type="domain" description="Carrier" evidence="1">
    <location>
        <begin position="1"/>
        <end position="77"/>
    </location>
</feature>
<feature type="modified residue" description="O-(pantetheine 4'-phosphoryl)serine" evidence="1">
    <location>
        <position position="38"/>
    </location>
</feature>
<organism>
    <name type="scientific">Streptomyces coeruleorubidus</name>
    <dbReference type="NCBI Taxonomy" id="116188"/>
    <lineage>
        <taxon>Bacteria</taxon>
        <taxon>Bacillati</taxon>
        <taxon>Actinomycetota</taxon>
        <taxon>Actinomycetes</taxon>
        <taxon>Kitasatosporales</taxon>
        <taxon>Streptomycetaceae</taxon>
        <taxon>Streptomyces</taxon>
    </lineage>
</organism>
<evidence type="ECO:0000255" key="1">
    <source>
        <dbReference type="PROSITE-ProRule" id="PRU00258"/>
    </source>
</evidence>
<evidence type="ECO:0000269" key="2">
    <source>
    </source>
</evidence>
<evidence type="ECO:0000269" key="3">
    <source>
    </source>
</evidence>
<evidence type="ECO:0000303" key="4">
    <source>
    </source>
</evidence>
<evidence type="ECO:0000305" key="5"/>
<evidence type="ECO:0000305" key="6">
    <source>
    </source>
</evidence>
<evidence type="ECO:0000305" key="7">
    <source>
    </source>
</evidence>
<proteinExistence type="inferred from homology"/>
<gene>
    <name evidence="4" type="primary">scoB</name>
</gene>